<keyword id="KW-0067">ATP-binding</keyword>
<keyword id="KW-0963">Cytoplasm</keyword>
<keyword id="KW-0315">Glutamine amidotransferase</keyword>
<keyword id="KW-0378">Hydrolase</keyword>
<keyword id="KW-0436">Ligase</keyword>
<keyword id="KW-0547">Nucleotide-binding</keyword>
<keyword id="KW-0658">Purine biosynthesis</keyword>
<proteinExistence type="inferred from homology"/>
<sequence length="252" mass="27101">MADLNVGVVVFPGSNCDHDTEYAVASFSGVKPVMLWHNEHDLKGCDAIILPGGFSYGDYLRCGSIARFSPIMREVIDFAGQGRPVLGICNGFQVLVESGLLEGALIRNAGRKFICRQSTISVVNNSTIFTDRYEKGEVLRVPVAHGEGNYYASVETIDSLESNGQVVFRYTDAEGNATAEANFNGSLNNIAGITNKQGNVLGLMPHPERASEELLGSGDGRRVFESLFAHLAGTKRSSRGCCSTSPTRRSAS</sequence>
<evidence type="ECO:0000255" key="1">
    <source>
        <dbReference type="HAMAP-Rule" id="MF_00421"/>
    </source>
</evidence>
<protein>
    <recommendedName>
        <fullName evidence="1">Phosphoribosylformylglycinamidine synthase subunit PurQ</fullName>
        <shortName evidence="1">FGAM synthase</shortName>
        <ecNumber evidence="1">6.3.5.3</ecNumber>
    </recommendedName>
    <alternativeName>
        <fullName evidence="1">Formylglycinamide ribonucleotide amidotransferase subunit I</fullName>
        <shortName evidence="1">FGAR amidotransferase I</shortName>
        <shortName evidence="1">FGAR-AT I</shortName>
    </alternativeName>
    <alternativeName>
        <fullName evidence="1">Glutaminase PurQ</fullName>
        <ecNumber evidence="1">3.5.1.2</ecNumber>
    </alternativeName>
    <alternativeName>
        <fullName evidence="1">Phosphoribosylformylglycinamidine synthase subunit I</fullName>
    </alternativeName>
</protein>
<reference key="1">
    <citation type="submission" date="2008-06" db="EMBL/GenBank/DDBJ databases">
        <title>Complete sequence of Chlorobaculum parvum NCIB 8327.</title>
        <authorList>
            <consortium name="US DOE Joint Genome Institute"/>
            <person name="Lucas S."/>
            <person name="Copeland A."/>
            <person name="Lapidus A."/>
            <person name="Glavina del Rio T."/>
            <person name="Dalin E."/>
            <person name="Tice H."/>
            <person name="Bruce D."/>
            <person name="Goodwin L."/>
            <person name="Pitluck S."/>
            <person name="Schmutz J."/>
            <person name="Larimer F."/>
            <person name="Land M."/>
            <person name="Hauser L."/>
            <person name="Kyrpides N."/>
            <person name="Mikhailova N."/>
            <person name="Zhao F."/>
            <person name="Li T."/>
            <person name="Liu Z."/>
            <person name="Overmann J."/>
            <person name="Bryant D.A."/>
            <person name="Richardson P."/>
        </authorList>
    </citation>
    <scope>NUCLEOTIDE SEQUENCE [LARGE SCALE GENOMIC DNA]</scope>
    <source>
        <strain>DSM 263 / NCIMB 8327</strain>
    </source>
</reference>
<name>PURQ_CHLP8</name>
<comment type="function">
    <text evidence="1">Part of the phosphoribosylformylglycinamidine synthase complex involved in the purines biosynthetic pathway. Catalyzes the ATP-dependent conversion of formylglycinamide ribonucleotide (FGAR) and glutamine to yield formylglycinamidine ribonucleotide (FGAM) and glutamate. The FGAM synthase complex is composed of three subunits. PurQ produces an ammonia molecule by converting glutamine to glutamate. PurL transfers the ammonia molecule to FGAR to form FGAM in an ATP-dependent manner. PurS interacts with PurQ and PurL and is thought to assist in the transfer of the ammonia molecule from PurQ to PurL.</text>
</comment>
<comment type="catalytic activity">
    <reaction evidence="1">
        <text>N(2)-formyl-N(1)-(5-phospho-beta-D-ribosyl)glycinamide + L-glutamine + ATP + H2O = 2-formamido-N(1)-(5-O-phospho-beta-D-ribosyl)acetamidine + L-glutamate + ADP + phosphate + H(+)</text>
        <dbReference type="Rhea" id="RHEA:17129"/>
        <dbReference type="ChEBI" id="CHEBI:15377"/>
        <dbReference type="ChEBI" id="CHEBI:15378"/>
        <dbReference type="ChEBI" id="CHEBI:29985"/>
        <dbReference type="ChEBI" id="CHEBI:30616"/>
        <dbReference type="ChEBI" id="CHEBI:43474"/>
        <dbReference type="ChEBI" id="CHEBI:58359"/>
        <dbReference type="ChEBI" id="CHEBI:147286"/>
        <dbReference type="ChEBI" id="CHEBI:147287"/>
        <dbReference type="ChEBI" id="CHEBI:456216"/>
        <dbReference type="EC" id="6.3.5.3"/>
    </reaction>
</comment>
<comment type="catalytic activity">
    <reaction evidence="1">
        <text>L-glutamine + H2O = L-glutamate + NH4(+)</text>
        <dbReference type="Rhea" id="RHEA:15889"/>
        <dbReference type="ChEBI" id="CHEBI:15377"/>
        <dbReference type="ChEBI" id="CHEBI:28938"/>
        <dbReference type="ChEBI" id="CHEBI:29985"/>
        <dbReference type="ChEBI" id="CHEBI:58359"/>
        <dbReference type="EC" id="3.5.1.2"/>
    </reaction>
</comment>
<comment type="pathway">
    <text evidence="1">Purine metabolism; IMP biosynthesis via de novo pathway; 5-amino-1-(5-phospho-D-ribosyl)imidazole from N(2)-formyl-N(1)-(5-phospho-D-ribosyl)glycinamide: step 1/2.</text>
</comment>
<comment type="subunit">
    <text evidence="1">Part of the FGAM synthase complex composed of 1 PurL, 1 PurQ and 2 PurS subunits.</text>
</comment>
<comment type="subcellular location">
    <subcellularLocation>
        <location evidence="1">Cytoplasm</location>
    </subcellularLocation>
</comment>
<feature type="chain" id="PRO_1000194852" description="Phosphoribosylformylglycinamidine synthase subunit PurQ">
    <location>
        <begin position="1"/>
        <end position="252"/>
    </location>
</feature>
<feature type="domain" description="Glutamine amidotransferase type-1" evidence="1">
    <location>
        <begin position="6"/>
        <end position="237"/>
    </location>
</feature>
<feature type="active site" description="Nucleophile" evidence="1">
    <location>
        <position position="89"/>
    </location>
</feature>
<feature type="active site" evidence="1">
    <location>
        <position position="206"/>
    </location>
</feature>
<feature type="active site" evidence="1">
    <location>
        <position position="208"/>
    </location>
</feature>
<organism>
    <name type="scientific">Chlorobaculum parvum (strain DSM 263 / NCIMB 8327)</name>
    <name type="common">Chlorobium vibrioforme subsp. thiosulfatophilum</name>
    <dbReference type="NCBI Taxonomy" id="517417"/>
    <lineage>
        <taxon>Bacteria</taxon>
        <taxon>Pseudomonadati</taxon>
        <taxon>Chlorobiota</taxon>
        <taxon>Chlorobiia</taxon>
        <taxon>Chlorobiales</taxon>
        <taxon>Chlorobiaceae</taxon>
        <taxon>Chlorobaculum</taxon>
    </lineage>
</organism>
<gene>
    <name evidence="1" type="primary">purQ</name>
    <name type="ordered locus">Cpar_0818</name>
</gene>
<accession>B3QMT1</accession>
<dbReference type="EC" id="6.3.5.3" evidence="1"/>
<dbReference type="EC" id="3.5.1.2" evidence="1"/>
<dbReference type="EMBL" id="CP001099">
    <property type="protein sequence ID" value="ACF11234.1"/>
    <property type="molecule type" value="Genomic_DNA"/>
</dbReference>
<dbReference type="RefSeq" id="WP_012502067.1">
    <property type="nucleotide sequence ID" value="NC_011027.1"/>
</dbReference>
<dbReference type="SMR" id="B3QMT1"/>
<dbReference type="STRING" id="517417.Cpar_0818"/>
<dbReference type="KEGG" id="cpc:Cpar_0818"/>
<dbReference type="eggNOG" id="COG0047">
    <property type="taxonomic scope" value="Bacteria"/>
</dbReference>
<dbReference type="HOGENOM" id="CLU_001031_3_1_10"/>
<dbReference type="OrthoDB" id="9804441at2"/>
<dbReference type="UniPathway" id="UPA00074">
    <property type="reaction ID" value="UER00128"/>
</dbReference>
<dbReference type="Proteomes" id="UP000008811">
    <property type="component" value="Chromosome"/>
</dbReference>
<dbReference type="GO" id="GO:0005737">
    <property type="term" value="C:cytoplasm"/>
    <property type="evidence" value="ECO:0007669"/>
    <property type="project" value="UniProtKB-SubCell"/>
</dbReference>
<dbReference type="GO" id="GO:0005524">
    <property type="term" value="F:ATP binding"/>
    <property type="evidence" value="ECO:0007669"/>
    <property type="project" value="UniProtKB-KW"/>
</dbReference>
<dbReference type="GO" id="GO:0004359">
    <property type="term" value="F:glutaminase activity"/>
    <property type="evidence" value="ECO:0007669"/>
    <property type="project" value="UniProtKB-EC"/>
</dbReference>
<dbReference type="GO" id="GO:0004642">
    <property type="term" value="F:phosphoribosylformylglycinamidine synthase activity"/>
    <property type="evidence" value="ECO:0007669"/>
    <property type="project" value="UniProtKB-UniRule"/>
</dbReference>
<dbReference type="GO" id="GO:0006189">
    <property type="term" value="P:'de novo' IMP biosynthetic process"/>
    <property type="evidence" value="ECO:0007669"/>
    <property type="project" value="UniProtKB-UniRule"/>
</dbReference>
<dbReference type="CDD" id="cd01740">
    <property type="entry name" value="GATase1_FGAR_AT"/>
    <property type="match status" value="1"/>
</dbReference>
<dbReference type="Gene3D" id="3.40.50.880">
    <property type="match status" value="1"/>
</dbReference>
<dbReference type="HAMAP" id="MF_00421">
    <property type="entry name" value="PurQ"/>
    <property type="match status" value="1"/>
</dbReference>
<dbReference type="InterPro" id="IPR029062">
    <property type="entry name" value="Class_I_gatase-like"/>
</dbReference>
<dbReference type="InterPro" id="IPR010075">
    <property type="entry name" value="PRibForGlyAmidine_synth_PurQ"/>
</dbReference>
<dbReference type="NCBIfam" id="TIGR01737">
    <property type="entry name" value="FGAM_synth_I"/>
    <property type="match status" value="1"/>
</dbReference>
<dbReference type="NCBIfam" id="NF002957">
    <property type="entry name" value="PRK03619.1"/>
    <property type="match status" value="1"/>
</dbReference>
<dbReference type="PANTHER" id="PTHR47552">
    <property type="entry name" value="PHOSPHORIBOSYLFORMYLGLYCINAMIDINE SYNTHASE SUBUNIT PURQ"/>
    <property type="match status" value="1"/>
</dbReference>
<dbReference type="PANTHER" id="PTHR47552:SF1">
    <property type="entry name" value="PHOSPHORIBOSYLFORMYLGLYCINAMIDINE SYNTHASE SUBUNIT PURQ"/>
    <property type="match status" value="1"/>
</dbReference>
<dbReference type="Pfam" id="PF13507">
    <property type="entry name" value="GATase_5"/>
    <property type="match status" value="1"/>
</dbReference>
<dbReference type="PIRSF" id="PIRSF001586">
    <property type="entry name" value="FGAM_synth_I"/>
    <property type="match status" value="1"/>
</dbReference>
<dbReference type="SMART" id="SM01211">
    <property type="entry name" value="GATase_5"/>
    <property type="match status" value="1"/>
</dbReference>
<dbReference type="SUPFAM" id="SSF52317">
    <property type="entry name" value="Class I glutamine amidotransferase-like"/>
    <property type="match status" value="1"/>
</dbReference>
<dbReference type="PROSITE" id="PS51273">
    <property type="entry name" value="GATASE_TYPE_1"/>
    <property type="match status" value="1"/>
</dbReference>